<feature type="chain" id="PRO_0000149735" description="Cryptic phage CTXphi transcriptional repressor RstR">
    <location>
        <begin position="1"/>
        <end position="112"/>
    </location>
</feature>
<feature type="domain" description="HTH cro/C1-type" evidence="1">
    <location>
        <begin position="7"/>
        <end position="61"/>
    </location>
</feature>
<feature type="DNA-binding region" description="H-T-H motif" evidence="1">
    <location>
        <begin position="18"/>
        <end position="37"/>
    </location>
</feature>
<dbReference type="EMBL" id="U83796">
    <property type="protein sequence ID" value="AAB81728.1"/>
    <property type="molecule type" value="Genomic_DNA"/>
</dbReference>
<dbReference type="EMBL" id="U83795">
    <property type="protein sequence ID" value="AAB81724.1"/>
    <property type="molecule type" value="Genomic_DNA"/>
</dbReference>
<dbReference type="EMBL" id="AE003852">
    <property type="protein sequence ID" value="AAF94621.1"/>
    <property type="molecule type" value="Genomic_DNA"/>
</dbReference>
<dbReference type="EMBL" id="AE003852">
    <property type="protein sequence ID" value="AAF94612.1"/>
    <property type="molecule type" value="Genomic_DNA"/>
</dbReference>
<dbReference type="PIR" id="H82197">
    <property type="entry name" value="H82197"/>
</dbReference>
<dbReference type="RefSeq" id="NP_231098.1">
    <property type="nucleotide sequence ID" value="NC_002505.1"/>
</dbReference>
<dbReference type="RefSeq" id="NP_231107.1">
    <property type="nucleotide sequence ID" value="NC_002505.1"/>
</dbReference>
<dbReference type="SMR" id="O34419"/>
<dbReference type="STRING" id="243277.VC_1455"/>
<dbReference type="DNASU" id="2613961"/>
<dbReference type="EnsemblBacteria" id="AAF94612">
    <property type="protein sequence ID" value="AAF94612"/>
    <property type="gene ID" value="VC_1455"/>
</dbReference>
<dbReference type="EnsemblBacteria" id="AAF94621">
    <property type="protein sequence ID" value="AAF94621"/>
    <property type="gene ID" value="VC_1464"/>
</dbReference>
<dbReference type="KEGG" id="vch:VC_1455"/>
<dbReference type="KEGG" id="vch:VC_1464"/>
<dbReference type="eggNOG" id="COG1476">
    <property type="taxonomic scope" value="Bacteria"/>
</dbReference>
<dbReference type="HOGENOM" id="CLU_066192_4_7_6"/>
<dbReference type="Proteomes" id="UP000000584">
    <property type="component" value="Chromosome 1"/>
</dbReference>
<dbReference type="GO" id="GO:0003677">
    <property type="term" value="F:DNA binding"/>
    <property type="evidence" value="ECO:0007669"/>
    <property type="project" value="UniProtKB-KW"/>
</dbReference>
<dbReference type="CDD" id="cd00093">
    <property type="entry name" value="HTH_XRE"/>
    <property type="match status" value="1"/>
</dbReference>
<dbReference type="Gene3D" id="1.10.260.40">
    <property type="entry name" value="lambda repressor-like DNA-binding domains"/>
    <property type="match status" value="1"/>
</dbReference>
<dbReference type="InterPro" id="IPR001387">
    <property type="entry name" value="Cro/C1-type_HTH"/>
</dbReference>
<dbReference type="InterPro" id="IPR010982">
    <property type="entry name" value="Lambda_DNA-bd_dom_sf"/>
</dbReference>
<dbReference type="InterPro" id="IPR049639">
    <property type="entry name" value="RstR"/>
</dbReference>
<dbReference type="NCBIfam" id="NF041951">
    <property type="entry name" value="phage_RstR"/>
    <property type="match status" value="1"/>
</dbReference>
<dbReference type="PANTHER" id="PTHR46558:SF11">
    <property type="entry name" value="HTH-TYPE TRANSCRIPTIONAL REGULATOR XRE"/>
    <property type="match status" value="1"/>
</dbReference>
<dbReference type="PANTHER" id="PTHR46558">
    <property type="entry name" value="TRACRIPTIONAL REGULATORY PROTEIN-RELATED-RELATED"/>
    <property type="match status" value="1"/>
</dbReference>
<dbReference type="Pfam" id="PF01381">
    <property type="entry name" value="HTH_3"/>
    <property type="match status" value="1"/>
</dbReference>
<dbReference type="SMART" id="SM00530">
    <property type="entry name" value="HTH_XRE"/>
    <property type="match status" value="1"/>
</dbReference>
<dbReference type="SUPFAM" id="SSF47413">
    <property type="entry name" value="lambda repressor-like DNA-binding domains"/>
    <property type="match status" value="1"/>
</dbReference>
<dbReference type="PROSITE" id="PS50943">
    <property type="entry name" value="HTH_CROC1"/>
    <property type="match status" value="1"/>
</dbReference>
<protein>
    <recommendedName>
        <fullName>Cryptic phage CTXphi transcriptional repressor RstR</fullName>
    </recommendedName>
</protein>
<keyword id="KW-0238">DNA-binding</keyword>
<keyword id="KW-1185">Reference proteome</keyword>
<keyword id="KW-0678">Repressor</keyword>
<keyword id="KW-0804">Transcription</keyword>
<keyword id="KW-0805">Transcription regulation</keyword>
<name>RSTR_VIBCH</name>
<proteinExistence type="predicted"/>
<evidence type="ECO:0000255" key="1">
    <source>
        <dbReference type="PROSITE-ProRule" id="PRU00257"/>
    </source>
</evidence>
<organism>
    <name type="scientific">Vibrio cholerae serotype O1 (strain ATCC 39315 / El Tor Inaba N16961)</name>
    <dbReference type="NCBI Taxonomy" id="243277"/>
    <lineage>
        <taxon>Bacteria</taxon>
        <taxon>Pseudomonadati</taxon>
        <taxon>Pseudomonadota</taxon>
        <taxon>Gammaproteobacteria</taxon>
        <taxon>Vibrionales</taxon>
        <taxon>Vibrionaceae</taxon>
        <taxon>Vibrio</taxon>
    </lineage>
</organism>
<gene>
    <name type="primary">rstR1</name>
    <name type="ordered locus">VC_1455</name>
</gene>
<gene>
    <name type="primary">rstR2</name>
    <name type="ordered locus">VC_1464</name>
</gene>
<reference key="1">
    <citation type="journal article" date="1997" name="Mol. Microbiol.">
        <title>Regulation, replication, and integration functions of the Vibrio cholerae CTXphi are encoded by region RS2.</title>
        <authorList>
            <person name="Waldor M.K."/>
            <person name="Rubin E.J."/>
            <person name="Pearson G.D."/>
            <person name="Kimsey H."/>
            <person name="Mekalanos J.J."/>
        </authorList>
    </citation>
    <scope>NUCLEOTIDE SEQUENCE [GENOMIC DNA]</scope>
    <source>
        <strain>ATCC 55056 / El Tor Ogawa E7946</strain>
    </source>
</reference>
<reference key="2">
    <citation type="journal article" date="2000" name="Nature">
        <title>DNA sequence of both chromosomes of the cholera pathogen Vibrio cholerae.</title>
        <authorList>
            <person name="Heidelberg J.F."/>
            <person name="Eisen J.A."/>
            <person name="Nelson W.C."/>
            <person name="Clayton R.A."/>
            <person name="Gwinn M.L."/>
            <person name="Dodson R.J."/>
            <person name="Haft D.H."/>
            <person name="Hickey E.K."/>
            <person name="Peterson J.D."/>
            <person name="Umayam L.A."/>
            <person name="Gill S.R."/>
            <person name="Nelson K.E."/>
            <person name="Read T.D."/>
            <person name="Tettelin H."/>
            <person name="Richardson D.L."/>
            <person name="Ermolaeva M.D."/>
            <person name="Vamathevan J.J."/>
            <person name="Bass S."/>
            <person name="Qin H."/>
            <person name="Dragoi I."/>
            <person name="Sellers P."/>
            <person name="McDonald L.A."/>
            <person name="Utterback T.R."/>
            <person name="Fleischmann R.D."/>
            <person name="Nierman W.C."/>
            <person name="White O."/>
            <person name="Salzberg S.L."/>
            <person name="Smith H.O."/>
            <person name="Colwell R.R."/>
            <person name="Mekalanos J.J."/>
            <person name="Venter J.C."/>
            <person name="Fraser C.M."/>
        </authorList>
    </citation>
    <scope>NUCLEOTIDE SEQUENCE [LARGE SCALE GENOMIC DNA]</scope>
    <source>
        <strain>ATCC 39315 / El Tor Inaba N16961</strain>
    </source>
</reference>
<sequence>MKIKERLANQRKAINKTQAQMADEIGISLTSYKKYESGEGLPTMENLVKIADALEISIDELCGRWATDENQELMLRLKKIQQLDEEEQKAISMVLESMLIRHSTKSILNHGA</sequence>
<accession>O34419</accession>
<comment type="function">
    <text>Transcriptional repressor of the integrated CTXPhi phage gene rstA2.</text>
</comment>